<dbReference type="EC" id="1.2.1.-" evidence="3"/>
<dbReference type="EMBL" id="AE004091">
    <property type="protein sequence ID" value="AAG07576.1"/>
    <property type="molecule type" value="Genomic_DNA"/>
</dbReference>
<dbReference type="PIR" id="C83122">
    <property type="entry name" value="C83122"/>
</dbReference>
<dbReference type="RefSeq" id="NP_252878.1">
    <property type="nucleotide sequence ID" value="NC_002516.2"/>
</dbReference>
<dbReference type="RefSeq" id="WP_003101377.1">
    <property type="nucleotide sequence ID" value="NZ_QZGE01000013.1"/>
</dbReference>
<dbReference type="PDB" id="7UYY">
    <property type="method" value="X-ray"/>
    <property type="resolution" value="2.70 A"/>
    <property type="chains" value="A/B=1-496"/>
</dbReference>
<dbReference type="PDBsum" id="7UYY"/>
<dbReference type="SMR" id="Q9HWJ2"/>
<dbReference type="STRING" id="208964.PA4189"/>
<dbReference type="PaxDb" id="208964-PA4189"/>
<dbReference type="GeneID" id="880328"/>
<dbReference type="KEGG" id="pae:PA4189"/>
<dbReference type="PATRIC" id="fig|208964.12.peg.4389"/>
<dbReference type="PseudoCAP" id="PA4189"/>
<dbReference type="HOGENOM" id="CLU_005391_0_2_6"/>
<dbReference type="InParanoid" id="Q9HWJ2"/>
<dbReference type="OrthoDB" id="9812625at2"/>
<dbReference type="PhylomeDB" id="Q9HWJ2"/>
<dbReference type="BioCyc" id="PAER208964:G1FZ6-4262-MONOMER"/>
<dbReference type="Proteomes" id="UP000002438">
    <property type="component" value="Chromosome"/>
</dbReference>
<dbReference type="GO" id="GO:0000166">
    <property type="term" value="F:nucleotide binding"/>
    <property type="evidence" value="ECO:0007669"/>
    <property type="project" value="UniProtKB-KW"/>
</dbReference>
<dbReference type="GO" id="GO:0016620">
    <property type="term" value="F:oxidoreductase activity, acting on the aldehyde or oxo group of donors, NAD or NADP as acceptor"/>
    <property type="evidence" value="ECO:0007669"/>
    <property type="project" value="InterPro"/>
</dbReference>
<dbReference type="CDD" id="cd07112">
    <property type="entry name" value="ALDH_GABALDH-PuuC"/>
    <property type="match status" value="1"/>
</dbReference>
<dbReference type="FunFam" id="3.40.605.10:FF:000001">
    <property type="entry name" value="Aldehyde dehydrogenase 1"/>
    <property type="match status" value="1"/>
</dbReference>
<dbReference type="Gene3D" id="3.40.605.10">
    <property type="entry name" value="Aldehyde Dehydrogenase, Chain A, domain 1"/>
    <property type="match status" value="1"/>
</dbReference>
<dbReference type="Gene3D" id="3.40.309.10">
    <property type="entry name" value="Aldehyde Dehydrogenase, Chain A, domain 2"/>
    <property type="match status" value="1"/>
</dbReference>
<dbReference type="InterPro" id="IPR016161">
    <property type="entry name" value="Ald_DH/histidinol_DH"/>
</dbReference>
<dbReference type="InterPro" id="IPR016163">
    <property type="entry name" value="Ald_DH_C"/>
</dbReference>
<dbReference type="InterPro" id="IPR016160">
    <property type="entry name" value="Ald_DH_CS_CYS"/>
</dbReference>
<dbReference type="InterPro" id="IPR029510">
    <property type="entry name" value="Ald_DH_CS_GLU"/>
</dbReference>
<dbReference type="InterPro" id="IPR016162">
    <property type="entry name" value="Ald_DH_N"/>
</dbReference>
<dbReference type="InterPro" id="IPR015590">
    <property type="entry name" value="Aldehyde_DH_dom"/>
</dbReference>
<dbReference type="PANTHER" id="PTHR11699">
    <property type="entry name" value="ALDEHYDE DEHYDROGENASE-RELATED"/>
    <property type="match status" value="1"/>
</dbReference>
<dbReference type="Pfam" id="PF00171">
    <property type="entry name" value="Aldedh"/>
    <property type="match status" value="1"/>
</dbReference>
<dbReference type="SUPFAM" id="SSF53720">
    <property type="entry name" value="ALDH-like"/>
    <property type="match status" value="1"/>
</dbReference>
<dbReference type="PROSITE" id="PS00070">
    <property type="entry name" value="ALDEHYDE_DEHYDR_CYS"/>
    <property type="match status" value="1"/>
</dbReference>
<dbReference type="PROSITE" id="PS00687">
    <property type="entry name" value="ALDEHYDE_DEHYDR_GLU"/>
    <property type="match status" value="1"/>
</dbReference>
<organism>
    <name type="scientific">Pseudomonas aeruginosa (strain ATCC 15692 / DSM 22644 / CIP 104116 / JCM 14847 / LMG 12228 / 1C / PRS 101 / PAO1)</name>
    <dbReference type="NCBI Taxonomy" id="208964"/>
    <lineage>
        <taxon>Bacteria</taxon>
        <taxon>Pseudomonadati</taxon>
        <taxon>Pseudomonadota</taxon>
        <taxon>Gammaproteobacteria</taxon>
        <taxon>Pseudomonadales</taxon>
        <taxon>Pseudomonadaceae</taxon>
        <taxon>Pseudomonas</taxon>
    </lineage>
</organism>
<accession>Q9HWJ2</accession>
<name>AMALD_PSEAE</name>
<evidence type="ECO:0000255" key="1">
    <source>
        <dbReference type="PROSITE-ProRule" id="PRU10007"/>
    </source>
</evidence>
<evidence type="ECO:0000255" key="2">
    <source>
        <dbReference type="PROSITE-ProRule" id="PRU10008"/>
    </source>
</evidence>
<evidence type="ECO:0000269" key="3">
    <source>
    </source>
</evidence>
<evidence type="ECO:0000303" key="4">
    <source>
    </source>
</evidence>
<evidence type="ECO:0000305" key="5"/>
<evidence type="ECO:0000305" key="6">
    <source>
    </source>
</evidence>
<evidence type="ECO:0000312" key="7">
    <source>
        <dbReference type="EMBL" id="AAG07576.1"/>
    </source>
</evidence>
<evidence type="ECO:0007744" key="8">
    <source>
        <dbReference type="PDB" id="7UYY"/>
    </source>
</evidence>
<evidence type="ECO:0007829" key="9">
    <source>
        <dbReference type="PDB" id="7UYY"/>
    </source>
</evidence>
<keyword id="KW-0002">3D-structure</keyword>
<keyword id="KW-0520">NAD</keyword>
<keyword id="KW-0547">Nucleotide-binding</keyword>
<keyword id="KW-0560">Oxidoreductase</keyword>
<keyword id="KW-1185">Reference proteome</keyword>
<comment type="function">
    <text evidence="3">NAD(+)-dependent aminoaldehyde dehydrogenase highly efficient with protonated aminoacetaldehyde (ACTAL) and 3-aminopropanaldehyde (APAL). Likely participates in a still uncharacterized metabolic pathway present in proteobacteria species, in which ACTAL might be an intermediate, yielding glycine. Highly prefers NAD(+) over NADP(+). Shows very poor activity with acetaldehyde, propanaldehyde, butanaldehyde, pentanaldehyde, dimethylaminoacetaldehyde, trimethylaminoacetaldehyde (betaine aldehyde), trimethylaminobutanaldehyde, short aliphatic hydroxyaldehydes such as 3-hydroxypropanaldehyde and 2-hydroxypropanaldehyde (lactaldehyde), and aromatic aldehydes.</text>
</comment>
<comment type="catalytic activity">
    <reaction evidence="3">
        <text>aminoacetaldehyde + NAD(+) + H2O = glycine + NADH + 2 H(+)</text>
        <dbReference type="Rhea" id="RHEA:81191"/>
        <dbReference type="ChEBI" id="CHEBI:15377"/>
        <dbReference type="ChEBI" id="CHEBI:15378"/>
        <dbReference type="ChEBI" id="CHEBI:57305"/>
        <dbReference type="ChEBI" id="CHEBI:57540"/>
        <dbReference type="ChEBI" id="CHEBI:57945"/>
        <dbReference type="ChEBI" id="CHEBI:58213"/>
    </reaction>
</comment>
<comment type="catalytic activity">
    <reaction evidence="3">
        <text>3-aminopropanal + NAD(+) + H2O = beta-alanine + NADH + 2 H(+)</text>
        <dbReference type="Rhea" id="RHEA:30695"/>
        <dbReference type="ChEBI" id="CHEBI:15377"/>
        <dbReference type="ChEBI" id="CHEBI:15378"/>
        <dbReference type="ChEBI" id="CHEBI:57540"/>
        <dbReference type="ChEBI" id="CHEBI:57945"/>
        <dbReference type="ChEBI" id="CHEBI:57966"/>
        <dbReference type="ChEBI" id="CHEBI:58374"/>
    </reaction>
</comment>
<comment type="biophysicochemical properties">
    <kinetics>
        <KM evidence="3">0.51 mM for aminoacetaldehyde (at pH 8 and 30 degrees Celsius)</KM>
        <KM evidence="3">0.05 mM for aminopropanaldehyde (at pH 8 and 30 degrees Celsius)</KM>
        <KM evidence="3">1.93 mM for aminobutanaldehyde (at pH 8 and 30 degrees Celsius)</KM>
        <KM evidence="3">192 uM for NAD(+) (at pH 8 and 30 degrees Celsius)</KM>
        <KM evidence="3">89 uM for NADP(+) (at pH 8 and 30 degrees Celsius)</KM>
        <Vmax evidence="3">73.7 umol/min/mg enzyme for the NAD(+)-dependent dehydrogenation of aminoacetaldehyde (at pH 8 and 30 degrees Celsius)</Vmax>
        <Vmax evidence="3">7.4 umol/min/mg enzyme for the NAD(+)-dependent dehydrogenation of aminopropanaldehyde (at pH 8 and 30 degrees Celsius)</Vmax>
        <Vmax evidence="3">4.4 umol/min/mg enzyme for the NAD(+)-dependent dehydrogenation of aminobutanaldehyde (at pH 8 and 30 degrees Celsius)</Vmax>
        <text evidence="3">kcat is 67.4 sec(-1) for the NAD(+)-dependent dehydrogenation of aminoacetaldehyde (at pH 8 and 30 degrees Celsius). kcat is 6.8 sec(-1) for the NAD(+)-dependent dehydrogenation of aminopropanaldehyde (at pH 8 and 30 degrees Celsius). kcat is 4.0 sec(-1) for the NAD(+)-dependent dehydrogenation of aminobutanaldehyde (at pH 8 and 30 degrees Celsius). The kinetic parameters with aminoacetaldehyde are probably underestimated.</text>
    </kinetics>
</comment>
<comment type="subunit">
    <text evidence="3">Homotetramer, formed by two symmetrical dimers.</text>
</comment>
<comment type="similarity">
    <text evidence="5">Belongs to the aldehyde dehydrogenase family.</text>
</comment>
<reference key="1">
    <citation type="journal article" date="2000" name="Nature">
        <title>Complete genome sequence of Pseudomonas aeruginosa PAO1, an opportunistic pathogen.</title>
        <authorList>
            <person name="Stover C.K."/>
            <person name="Pham X.-Q.T."/>
            <person name="Erwin A.L."/>
            <person name="Mizoguchi S.D."/>
            <person name="Warrener P."/>
            <person name="Hickey M.J."/>
            <person name="Brinkman F.S.L."/>
            <person name="Hufnagle W.O."/>
            <person name="Kowalik D.J."/>
            <person name="Lagrou M."/>
            <person name="Garber R.L."/>
            <person name="Goltry L."/>
            <person name="Tolentino E."/>
            <person name="Westbrock-Wadman S."/>
            <person name="Yuan Y."/>
            <person name="Brody L.L."/>
            <person name="Coulter S.N."/>
            <person name="Folger K.R."/>
            <person name="Kas A."/>
            <person name="Larbig K."/>
            <person name="Lim R.M."/>
            <person name="Smith K.A."/>
            <person name="Spencer D.H."/>
            <person name="Wong G.K.-S."/>
            <person name="Wu Z."/>
            <person name="Paulsen I.T."/>
            <person name="Reizer J."/>
            <person name="Saier M.H. Jr."/>
            <person name="Hancock R.E.W."/>
            <person name="Lory S."/>
            <person name="Olson M.V."/>
        </authorList>
    </citation>
    <scope>NUCLEOTIDE SEQUENCE [LARGE SCALE GENOMIC DNA]</scope>
    <source>
        <strain>ATCC 15692 / DSM 22644 / CIP 104116 / JCM 14847 / LMG 12228 / 1C / PRS 101 / PAO1</strain>
    </source>
</reference>
<reference evidence="8" key="2">
    <citation type="journal article" date="2023" name="Biochem. J.">
        <title>The uncharacterized Pseudomonas aeruginosa PA4189 is a novel and efficient aminoacetaldehyde dehydrogenase.</title>
        <authorList>
            <person name="Fernandez-Silva A."/>
            <person name="Juarez-Vazquez A.L."/>
            <person name="Gonzalez-Segura L."/>
            <person name="Juarez-Diaz J.A."/>
            <person name="Munoz-Clares R.A."/>
        </authorList>
    </citation>
    <scope>X-RAY CRYSTALLOGRAPHY (2.70 ANGSTROMS) IN COMPLEX WITH NADH</scope>
    <scope>FUNCTION</scope>
    <scope>CATALYTIC ACTIVITY</scope>
    <scope>BIOPHYSICOCHEMICAL PROPERTIES</scope>
    <scope>SUBUNIT</scope>
    <scope>MUTAGENESIS OF GLU-457</scope>
    <source>
        <strain>ATCC 15692 / DSM 22644 / CIP 104116 / JCM 14847 / LMG 12228 / 1C / PRS 101 / PAO1</strain>
    </source>
</reference>
<protein>
    <recommendedName>
        <fullName evidence="4">Aminoacetaldehyde dehydrogenase</fullName>
        <shortName evidence="4">ACTAL dehydrogenase</shortName>
        <ecNumber evidence="3">1.2.1.-</ecNumber>
    </recommendedName>
</protein>
<sequence>MTELLSREEYAAIAATLDLPQRAFIDGGFRDACGGRTFASTNPATGELLAQVAACDAEDVGHAVASARRAFEDGRWRSRTPAERKAALLRLAELLEEHLLELAVMESLDSGKPIRECQHTDLPETINTLRWHAELIDKIYDSTAPVGSAALAMVVREPIGVVGLVLPWNFPLLMLAWKIGPALAAGCSVVVKPAPETSLTALRVAELASQAGIPAGVFNVVPGGGREAGEPLGRHPDVAMVSFTGSTATGRLFLKYAAESNLKRVVLECGGKNPAVVMNDVEDLDLVAQHVVNGAFWNMGENCSASSRLIVHAEVREALLERIGAQLREWRMGDPLDPRNRLGALVSPAHFEKVRAYLDQARTERLAVRFGGATEAGIFVEPTVVDGVSPHSRLFREEIFGPLLSVTSFDDIDEAIALANDTVYGLAASAYTGSLRHALRLSREIRAGIVTVNCFGEGDASTPFGGYKESGFGGRDKSVWAHDQYTELKTIWIDAS</sequence>
<proteinExistence type="evidence at protein level"/>
<gene>
    <name evidence="7" type="ordered locus">PA4189</name>
</gene>
<feature type="chain" id="PRO_0000461401" description="Aminoacetaldehyde dehydrogenase">
    <location>
        <begin position="1"/>
        <end position="496"/>
    </location>
</feature>
<feature type="active site" description="Proton acceptor" evidence="1 6">
    <location>
        <position position="268"/>
    </location>
</feature>
<feature type="active site" description="Nucleophile" evidence="2 6">
    <location>
        <position position="303"/>
    </location>
</feature>
<feature type="binding site" evidence="3 8">
    <location>
        <position position="166"/>
    </location>
    <ligand>
        <name>NADH</name>
        <dbReference type="ChEBI" id="CHEBI:57945"/>
    </ligand>
</feature>
<feature type="binding site" evidence="3 8">
    <location>
        <position position="168"/>
    </location>
    <ligand>
        <name>NADH</name>
        <dbReference type="ChEBI" id="CHEBI:57945"/>
    </ligand>
</feature>
<feature type="binding site" evidence="3 8">
    <location>
        <position position="192"/>
    </location>
    <ligand>
        <name>NADH</name>
        <dbReference type="ChEBI" id="CHEBI:57945"/>
    </ligand>
</feature>
<feature type="binding site" evidence="3 8">
    <location>
        <position position="246"/>
    </location>
    <ligand>
        <name>NADH</name>
        <dbReference type="ChEBI" id="CHEBI:57945"/>
    </ligand>
</feature>
<feature type="binding site" evidence="3 8">
    <location>
        <position position="249"/>
    </location>
    <ligand>
        <name>NADH</name>
        <dbReference type="ChEBI" id="CHEBI:57945"/>
    </ligand>
</feature>
<feature type="binding site" evidence="3 8">
    <location>
        <position position="256"/>
    </location>
    <ligand>
        <name>NADH</name>
        <dbReference type="ChEBI" id="CHEBI:57945"/>
    </ligand>
</feature>
<feature type="binding site" evidence="3 8">
    <location>
        <position position="269"/>
    </location>
    <ligand>
        <name>NADH</name>
        <dbReference type="ChEBI" id="CHEBI:57945"/>
    </ligand>
</feature>
<feature type="binding site" evidence="3 8">
    <location>
        <position position="353"/>
    </location>
    <ligand>
        <name>NADH</name>
        <dbReference type="ChEBI" id="CHEBI:57945"/>
    </ligand>
</feature>
<feature type="binding site" evidence="3 8">
    <location>
        <position position="398"/>
    </location>
    <ligand>
        <name>NADH</name>
        <dbReference type="ChEBI" id="CHEBI:57945"/>
    </ligand>
</feature>
<feature type="site" description="Important in defining aldehyde specificity" evidence="3">
    <location>
        <position position="457"/>
    </location>
</feature>
<feature type="mutagenesis site" description="High decrease in catalytic efficiency with ACTAL and APAL as substrates." evidence="3">
    <original>E</original>
    <variation>G</variation>
    <variation>Q</variation>
    <location>
        <position position="457"/>
    </location>
</feature>
<feature type="helix" evidence="9">
    <location>
        <begin position="7"/>
        <end position="15"/>
    </location>
</feature>
<feature type="strand" evidence="9">
    <location>
        <begin position="22"/>
        <end position="25"/>
    </location>
</feature>
<feature type="strand" evidence="9">
    <location>
        <begin position="28"/>
        <end position="30"/>
    </location>
</feature>
<feature type="strand" evidence="9">
    <location>
        <begin position="37"/>
        <end position="41"/>
    </location>
</feature>
<feature type="turn" evidence="9">
    <location>
        <begin position="43"/>
        <end position="45"/>
    </location>
</feature>
<feature type="strand" evidence="9">
    <location>
        <begin position="48"/>
        <end position="53"/>
    </location>
</feature>
<feature type="helix" evidence="9">
    <location>
        <begin position="57"/>
        <end position="73"/>
    </location>
</feature>
<feature type="turn" evidence="9">
    <location>
        <begin position="74"/>
        <end position="78"/>
    </location>
</feature>
<feature type="helix" evidence="9">
    <location>
        <begin position="81"/>
        <end position="97"/>
    </location>
</feature>
<feature type="helix" evidence="9">
    <location>
        <begin position="99"/>
        <end position="110"/>
    </location>
</feature>
<feature type="helix" evidence="9">
    <location>
        <begin position="114"/>
        <end position="119"/>
    </location>
</feature>
<feature type="helix" evidence="9">
    <location>
        <begin position="121"/>
        <end position="135"/>
    </location>
</feature>
<feature type="helix" evidence="9">
    <location>
        <begin position="136"/>
        <end position="138"/>
    </location>
</feature>
<feature type="strand" evidence="9">
    <location>
        <begin position="150"/>
        <end position="158"/>
    </location>
</feature>
<feature type="strand" evidence="9">
    <location>
        <begin position="160"/>
        <end position="165"/>
    </location>
</feature>
<feature type="strand" evidence="9">
    <location>
        <begin position="168"/>
        <end position="170"/>
    </location>
</feature>
<feature type="helix" evidence="9">
    <location>
        <begin position="171"/>
        <end position="184"/>
    </location>
</feature>
<feature type="strand" evidence="9">
    <location>
        <begin position="188"/>
        <end position="192"/>
    </location>
</feature>
<feature type="helix" evidence="9">
    <location>
        <begin position="195"/>
        <end position="197"/>
    </location>
</feature>
<feature type="helix" evidence="9">
    <location>
        <begin position="199"/>
        <end position="211"/>
    </location>
</feature>
<feature type="strand" evidence="9">
    <location>
        <begin position="217"/>
        <end position="220"/>
    </location>
</feature>
<feature type="helix" evidence="9">
    <location>
        <begin position="225"/>
        <end position="234"/>
    </location>
</feature>
<feature type="strand" evidence="9">
    <location>
        <begin position="240"/>
        <end position="245"/>
    </location>
</feature>
<feature type="helix" evidence="9">
    <location>
        <begin position="247"/>
        <end position="259"/>
    </location>
</feature>
<feature type="strand" evidence="9">
    <location>
        <begin position="264"/>
        <end position="268"/>
    </location>
</feature>
<feature type="strand" evidence="9">
    <location>
        <begin position="273"/>
        <end position="277"/>
    </location>
</feature>
<feature type="helix" evidence="9">
    <location>
        <begin position="284"/>
        <end position="296"/>
    </location>
</feature>
<feature type="helix" evidence="9">
    <location>
        <begin position="297"/>
        <end position="300"/>
    </location>
</feature>
<feature type="strand" evidence="9">
    <location>
        <begin position="306"/>
        <end position="312"/>
    </location>
</feature>
<feature type="turn" evidence="9">
    <location>
        <begin position="313"/>
        <end position="315"/>
    </location>
</feature>
<feature type="helix" evidence="9">
    <location>
        <begin position="316"/>
        <end position="327"/>
    </location>
</feature>
<feature type="helix" evidence="9">
    <location>
        <begin position="348"/>
        <end position="363"/>
    </location>
</feature>
<feature type="strand" evidence="9">
    <location>
        <begin position="367"/>
        <end position="370"/>
    </location>
</feature>
<feature type="turn" evidence="9">
    <location>
        <begin position="376"/>
        <end position="378"/>
    </location>
</feature>
<feature type="strand" evidence="9">
    <location>
        <begin position="383"/>
        <end position="386"/>
    </location>
</feature>
<feature type="helix" evidence="9">
    <location>
        <begin position="393"/>
        <end position="396"/>
    </location>
</feature>
<feature type="strand" evidence="9">
    <location>
        <begin position="401"/>
        <end position="411"/>
    </location>
</feature>
<feature type="helix" evidence="9">
    <location>
        <begin position="412"/>
        <end position="420"/>
    </location>
</feature>
<feature type="strand" evidence="9">
    <location>
        <begin position="428"/>
        <end position="431"/>
    </location>
</feature>
<feature type="helix" evidence="9">
    <location>
        <begin position="435"/>
        <end position="444"/>
    </location>
</feature>
<feature type="strand" evidence="9">
    <location>
        <begin position="447"/>
        <end position="454"/>
    </location>
</feature>
<feature type="helix" evidence="9">
    <location>
        <begin position="468"/>
        <end position="470"/>
    </location>
</feature>
<feature type="strand" evidence="9">
    <location>
        <begin position="471"/>
        <end position="473"/>
    </location>
</feature>
<feature type="turn" evidence="9">
    <location>
        <begin position="478"/>
        <end position="480"/>
    </location>
</feature>
<feature type="helix" evidence="9">
    <location>
        <begin position="481"/>
        <end position="484"/>
    </location>
</feature>
<feature type="strand" evidence="9">
    <location>
        <begin position="486"/>
        <end position="494"/>
    </location>
</feature>